<gene>
    <name evidence="1" type="primary">psbL</name>
</gene>
<feature type="chain" id="PRO_0000219769" description="Photosystem II reaction center protein L">
    <location>
        <begin position="1"/>
        <end position="38"/>
    </location>
</feature>
<feature type="transmembrane region" description="Helical" evidence="1">
    <location>
        <begin position="17"/>
        <end position="37"/>
    </location>
</feature>
<dbReference type="EMBL" id="AY007486">
    <property type="protein sequence ID" value="AAG27028.1"/>
    <property type="molecule type" value="Genomic_DNA"/>
</dbReference>
<dbReference type="RefSeq" id="YP_009240158.1">
    <property type="nucleotide sequence ID" value="NC_029734.1"/>
</dbReference>
<dbReference type="SMR" id="Q7HIT6"/>
<dbReference type="GeneID" id="27109670"/>
<dbReference type="GO" id="GO:0009535">
    <property type="term" value="C:chloroplast thylakoid membrane"/>
    <property type="evidence" value="ECO:0007669"/>
    <property type="project" value="UniProtKB-SubCell"/>
</dbReference>
<dbReference type="GO" id="GO:0009539">
    <property type="term" value="C:photosystem II reaction center"/>
    <property type="evidence" value="ECO:0007669"/>
    <property type="project" value="InterPro"/>
</dbReference>
<dbReference type="GO" id="GO:0015979">
    <property type="term" value="P:photosynthesis"/>
    <property type="evidence" value="ECO:0007669"/>
    <property type="project" value="UniProtKB-UniRule"/>
</dbReference>
<dbReference type="HAMAP" id="MF_01317">
    <property type="entry name" value="PSII_PsbL"/>
    <property type="match status" value="1"/>
</dbReference>
<dbReference type="InterPro" id="IPR003372">
    <property type="entry name" value="PSII_PsbL"/>
</dbReference>
<dbReference type="InterPro" id="IPR037266">
    <property type="entry name" value="PSII_PsbL_sf"/>
</dbReference>
<dbReference type="NCBIfam" id="NF001972">
    <property type="entry name" value="PRK00753.1"/>
    <property type="match status" value="1"/>
</dbReference>
<dbReference type="Pfam" id="PF02419">
    <property type="entry name" value="PsbL"/>
    <property type="match status" value="1"/>
</dbReference>
<dbReference type="SUPFAM" id="SSF161017">
    <property type="entry name" value="Photosystem II reaction center protein L, PsbL"/>
    <property type="match status" value="1"/>
</dbReference>
<proteinExistence type="inferred from homology"/>
<protein>
    <recommendedName>
        <fullName evidence="1">Photosystem II reaction center protein L</fullName>
        <shortName evidence="1">PSII-L</shortName>
    </recommendedName>
</protein>
<geneLocation type="chloroplast"/>
<reference key="1">
    <citation type="submission" date="2000-02" db="EMBL/GenBank/DDBJ databases">
        <title>Long branches in the seed plants and the root of the angiosperms.</title>
        <authorList>
            <person name="Graham S.W."/>
            <person name="Reeves P.A."/>
            <person name="Burns A."/>
            <person name="Olmstead R.G."/>
        </authorList>
    </citation>
    <scope>NUCLEOTIDE SEQUENCE [GENOMIC DNA]</scope>
</reference>
<name>PSBL_SCIVE</name>
<accession>Q7HIT6</accession>
<comment type="function">
    <text evidence="1">One of the components of the core complex of photosystem II (PSII). PSII is a light-driven water:plastoquinone oxidoreductase that uses light energy to abstract electrons from H(2)O, generating O(2) and a proton gradient subsequently used for ATP formation. It consists of a core antenna complex that captures photons, and an electron transfer chain that converts photonic excitation into a charge separation. This subunit is found at the monomer-monomer interface and is required for correct PSII assembly and/or dimerization.</text>
</comment>
<comment type="subunit">
    <text evidence="1">PSII is composed of 1 copy each of membrane proteins PsbA, PsbB, PsbC, PsbD, PsbE, PsbF, PsbH, PsbI, PsbJ, PsbK, PsbL, PsbM, PsbT, PsbX, PsbY, PsbZ, Psb30/Ycf12, at least 3 peripheral proteins of the oxygen-evolving complex and a large number of cofactors. It forms dimeric complexes.</text>
</comment>
<comment type="subcellular location">
    <subcellularLocation>
        <location evidence="1">Plastid</location>
        <location evidence="1">Chloroplast thylakoid membrane</location>
        <topology evidence="1">Single-pass membrane protein</topology>
    </subcellularLocation>
</comment>
<comment type="similarity">
    <text evidence="1">Belongs to the PsbL family.</text>
</comment>
<organism>
    <name type="scientific">Sciadopitys verticillata</name>
    <name type="common">Japanese umbrella-pine</name>
    <name type="synonym">Taxus verticillata</name>
    <dbReference type="NCBI Taxonomy" id="28979"/>
    <lineage>
        <taxon>Eukaryota</taxon>
        <taxon>Viridiplantae</taxon>
        <taxon>Streptophyta</taxon>
        <taxon>Embryophyta</taxon>
        <taxon>Tracheophyta</taxon>
        <taxon>Spermatophyta</taxon>
        <taxon>Pinopsida</taxon>
        <taxon>Pinidae</taxon>
        <taxon>Conifers II</taxon>
        <taxon>Cupressales</taxon>
        <taxon>Sciadopityaceae</taxon>
        <taxon>Sciadopitys</taxon>
    </lineage>
</organism>
<sequence length="38" mass="4497">MTQSNPNEQNVELNRTSLYWGLLLIFVLAVLFSNYFFN</sequence>
<evidence type="ECO:0000255" key="1">
    <source>
        <dbReference type="HAMAP-Rule" id="MF_01317"/>
    </source>
</evidence>
<keyword id="KW-0150">Chloroplast</keyword>
<keyword id="KW-0472">Membrane</keyword>
<keyword id="KW-0602">Photosynthesis</keyword>
<keyword id="KW-0604">Photosystem II</keyword>
<keyword id="KW-0934">Plastid</keyword>
<keyword id="KW-0674">Reaction center</keyword>
<keyword id="KW-0793">Thylakoid</keyword>
<keyword id="KW-0812">Transmembrane</keyword>
<keyword id="KW-1133">Transmembrane helix</keyword>